<proteinExistence type="evidence at protein level"/>
<protein>
    <recommendedName>
        <fullName>Uncharacterized protein YNL134C</fullName>
    </recommendedName>
</protein>
<name>YNN4_YEAST</name>
<organism>
    <name type="scientific">Saccharomyces cerevisiae (strain ATCC 204508 / S288c)</name>
    <name type="common">Baker's yeast</name>
    <dbReference type="NCBI Taxonomy" id="559292"/>
    <lineage>
        <taxon>Eukaryota</taxon>
        <taxon>Fungi</taxon>
        <taxon>Dikarya</taxon>
        <taxon>Ascomycota</taxon>
        <taxon>Saccharomycotina</taxon>
        <taxon>Saccharomycetes</taxon>
        <taxon>Saccharomycetales</taxon>
        <taxon>Saccharomycetaceae</taxon>
        <taxon>Saccharomyces</taxon>
    </lineage>
</organism>
<feature type="chain" id="PRO_0000203426" description="Uncharacterized protein YNL134C">
    <location>
        <begin position="1"/>
        <end position="376"/>
    </location>
</feature>
<accession>P53912</accession>
<accession>D6W148</accession>
<comment type="miscellaneous">
    <text evidence="1">Present with 3490 molecules/cell in log phase SD medium.</text>
</comment>
<comment type="similarity">
    <text evidence="2">Belongs to the YCR102c/YLR460c/YNL134c family.</text>
</comment>
<evidence type="ECO:0000269" key="1">
    <source>
    </source>
</evidence>
<evidence type="ECO:0000305" key="2"/>
<gene>
    <name type="ordered locus">YNL134C</name>
    <name type="ORF">N1214</name>
    <name type="ORF">N1847</name>
</gene>
<reference key="1">
    <citation type="journal article" date="1995" name="Yeast">
        <title>A 43.5 kb segment of yeast chromosome XIV, which contains MFA2, MEP2, CAP/SRV2, NAM9, FKB1/FPR1/RBP1, MOM22 and CPT1, predicts an adenosine deaminase gene and 14 new open reading frames.</title>
        <authorList>
            <person name="Mallet L."/>
            <person name="Bussereau F."/>
            <person name="Jacquet M."/>
        </authorList>
    </citation>
    <scope>NUCLEOTIDE SEQUENCE [GENOMIC DNA]</scope>
    <source>
        <strain>ATCC 204508 / S288c</strain>
    </source>
</reference>
<reference key="2">
    <citation type="journal article" date="1997" name="Nature">
        <title>The nucleotide sequence of Saccharomyces cerevisiae chromosome XIV and its evolutionary implications.</title>
        <authorList>
            <person name="Philippsen P."/>
            <person name="Kleine K."/>
            <person name="Poehlmann R."/>
            <person name="Duesterhoeft A."/>
            <person name="Hamberg K."/>
            <person name="Hegemann J.H."/>
            <person name="Obermaier B."/>
            <person name="Urrestarazu L.A."/>
            <person name="Aert R."/>
            <person name="Albermann K."/>
            <person name="Altmann R."/>
            <person name="Andre B."/>
            <person name="Baladron V."/>
            <person name="Ballesta J.P.G."/>
            <person name="Becam A.-M."/>
            <person name="Beinhauer J.D."/>
            <person name="Boskovic J."/>
            <person name="Buitrago M.J."/>
            <person name="Bussereau F."/>
            <person name="Coster F."/>
            <person name="Crouzet M."/>
            <person name="D'Angelo M."/>
            <person name="Dal Pero F."/>
            <person name="De Antoni A."/>
            <person name="del Rey F."/>
            <person name="Doignon F."/>
            <person name="Domdey H."/>
            <person name="Dubois E."/>
            <person name="Fiedler T.A."/>
            <person name="Fleig U."/>
            <person name="Floeth M."/>
            <person name="Fritz C."/>
            <person name="Gaillardin C."/>
            <person name="Garcia-Cantalejo J.M."/>
            <person name="Glansdorff N."/>
            <person name="Goffeau A."/>
            <person name="Gueldener U."/>
            <person name="Herbert C.J."/>
            <person name="Heumann K."/>
            <person name="Heuss-Neitzel D."/>
            <person name="Hilbert H."/>
            <person name="Hinni K."/>
            <person name="Iraqui Houssaini I."/>
            <person name="Jacquet M."/>
            <person name="Jimenez A."/>
            <person name="Jonniaux J.-L."/>
            <person name="Karpfinger-Hartl L."/>
            <person name="Lanfranchi G."/>
            <person name="Lepingle A."/>
            <person name="Levesque H."/>
            <person name="Lyck R."/>
            <person name="Maftahi M."/>
            <person name="Mallet L."/>
            <person name="Maurer C.T.C."/>
            <person name="Messenguy F."/>
            <person name="Mewes H.-W."/>
            <person name="Moestl D."/>
            <person name="Nasr F."/>
            <person name="Nicaud J.-M."/>
            <person name="Niedenthal R.K."/>
            <person name="Pandolfo D."/>
            <person name="Pierard A."/>
            <person name="Piravandi E."/>
            <person name="Planta R.J."/>
            <person name="Pohl T.M."/>
            <person name="Purnelle B."/>
            <person name="Rebischung C."/>
            <person name="Remacha M.A."/>
            <person name="Revuelta J.L."/>
            <person name="Rinke M."/>
            <person name="Saiz J.E."/>
            <person name="Sartorello F."/>
            <person name="Scherens B."/>
            <person name="Sen-Gupta M."/>
            <person name="Soler-Mira A."/>
            <person name="Urbanus J.H.M."/>
            <person name="Valle G."/>
            <person name="Van Dyck L."/>
            <person name="Verhasselt P."/>
            <person name="Vierendeels F."/>
            <person name="Vissers S."/>
            <person name="Voet M."/>
            <person name="Volckaert G."/>
            <person name="Wach A."/>
            <person name="Wambutt R."/>
            <person name="Wedler H."/>
            <person name="Zollner A."/>
            <person name="Hani J."/>
        </authorList>
    </citation>
    <scope>NUCLEOTIDE SEQUENCE [LARGE SCALE GENOMIC DNA]</scope>
    <source>
        <strain>ATCC 204508 / S288c</strain>
    </source>
</reference>
<reference key="3">
    <citation type="journal article" date="2014" name="G3 (Bethesda)">
        <title>The reference genome sequence of Saccharomyces cerevisiae: Then and now.</title>
        <authorList>
            <person name="Engel S.R."/>
            <person name="Dietrich F.S."/>
            <person name="Fisk D.G."/>
            <person name="Binkley G."/>
            <person name="Balakrishnan R."/>
            <person name="Costanzo M.C."/>
            <person name="Dwight S.S."/>
            <person name="Hitz B.C."/>
            <person name="Karra K."/>
            <person name="Nash R.S."/>
            <person name="Weng S."/>
            <person name="Wong E.D."/>
            <person name="Lloyd P."/>
            <person name="Skrzypek M.S."/>
            <person name="Miyasato S.R."/>
            <person name="Simison M."/>
            <person name="Cherry J.M."/>
        </authorList>
    </citation>
    <scope>GENOME REANNOTATION</scope>
    <source>
        <strain>ATCC 204508 / S288c</strain>
    </source>
</reference>
<reference key="4">
    <citation type="journal article" date="2007" name="Genome Res.">
        <title>Approaching a complete repository of sequence-verified protein-encoding clones for Saccharomyces cerevisiae.</title>
        <authorList>
            <person name="Hu Y."/>
            <person name="Rolfs A."/>
            <person name="Bhullar B."/>
            <person name="Murthy T.V.S."/>
            <person name="Zhu C."/>
            <person name="Berger M.F."/>
            <person name="Camargo A.A."/>
            <person name="Kelley F."/>
            <person name="McCarron S."/>
            <person name="Jepson D."/>
            <person name="Richardson A."/>
            <person name="Raphael J."/>
            <person name="Moreira D."/>
            <person name="Taycher E."/>
            <person name="Zuo D."/>
            <person name="Mohr S."/>
            <person name="Kane M.F."/>
            <person name="Williamson J."/>
            <person name="Simpson A.J.G."/>
            <person name="Bulyk M.L."/>
            <person name="Harlow E."/>
            <person name="Marsischky G."/>
            <person name="Kolodner R.D."/>
            <person name="LaBaer J."/>
        </authorList>
    </citation>
    <scope>NUCLEOTIDE SEQUENCE [GENOMIC DNA]</scope>
    <source>
        <strain>ATCC 204508 / S288c</strain>
    </source>
</reference>
<reference key="5">
    <citation type="journal article" date="2003" name="Nature">
        <title>Global analysis of protein expression in yeast.</title>
        <authorList>
            <person name="Ghaemmaghami S."/>
            <person name="Huh W.-K."/>
            <person name="Bower K."/>
            <person name="Howson R.W."/>
            <person name="Belle A."/>
            <person name="Dephoure N."/>
            <person name="O'Shea E.K."/>
            <person name="Weissman J.S."/>
        </authorList>
    </citation>
    <scope>LEVEL OF PROTEIN EXPRESSION [LARGE SCALE ANALYSIS]</scope>
</reference>
<keyword id="KW-1185">Reference proteome</keyword>
<sequence length="376" mass="41164">MSASIPETMKAVVIENGKAVVKQDIPIPELEEGFVLIKTVAVAGNPTDWKHIDFKIGPQGALLGCDAAGQIVKLGPNVDAARFAIGDYIYGVIHGASVRFPSNGAFAEYSAISSETAYKPAREFRLCGKDKLPEGPVKSLEGAVSLPVSLTTAGMILTHSFGLDMTWKPSKAQRDQPILFWGGATAVGQMLIQLAKKLNGFSKIIVVASRKHEKLLKEYGADELFDYHDADVIEQIKKKYNNIPYLVDCVSNTETIQQVYKCAADDLDATVVQLTVLTEKDIKEEDRRQNVSIEGTLLYLIGGNDVPFGTFTLPADPEYKEAAIKFIKFINPKINDGEIHHIPVKVYKNGLDDIPQLLDDIKHGRNSGEKLVAVLK</sequence>
<dbReference type="EMBL" id="Z46843">
    <property type="protein sequence ID" value="CAA86891.1"/>
    <property type="molecule type" value="Genomic_DNA"/>
</dbReference>
<dbReference type="EMBL" id="Z71410">
    <property type="protein sequence ID" value="CAA96016.1"/>
    <property type="molecule type" value="Genomic_DNA"/>
</dbReference>
<dbReference type="EMBL" id="AY558022">
    <property type="protein sequence ID" value="AAS56348.1"/>
    <property type="molecule type" value="Genomic_DNA"/>
</dbReference>
<dbReference type="EMBL" id="BK006947">
    <property type="protein sequence ID" value="DAA10414.1"/>
    <property type="molecule type" value="Genomic_DNA"/>
</dbReference>
<dbReference type="PIR" id="S55149">
    <property type="entry name" value="S55149"/>
</dbReference>
<dbReference type="RefSeq" id="NP_014265.3">
    <property type="nucleotide sequence ID" value="NM_001182972.3"/>
</dbReference>
<dbReference type="SMR" id="P53912"/>
<dbReference type="BioGRID" id="35692">
    <property type="interactions" value="119"/>
</dbReference>
<dbReference type="DIP" id="DIP-4600N"/>
<dbReference type="FunCoup" id="P53912">
    <property type="interactions" value="288"/>
</dbReference>
<dbReference type="IntAct" id="P53912">
    <property type="interactions" value="13"/>
</dbReference>
<dbReference type="MINT" id="P53912"/>
<dbReference type="STRING" id="4932.YNL134C"/>
<dbReference type="iPTMnet" id="P53912"/>
<dbReference type="PaxDb" id="4932-YNL134C"/>
<dbReference type="PeptideAtlas" id="P53912"/>
<dbReference type="EnsemblFungi" id="YNL134C_mRNA">
    <property type="protein sequence ID" value="YNL134C"/>
    <property type="gene ID" value="YNL134C"/>
</dbReference>
<dbReference type="GeneID" id="855588"/>
<dbReference type="KEGG" id="sce:YNL134C"/>
<dbReference type="AGR" id="SGD:S000005078"/>
<dbReference type="SGD" id="S000005078">
    <property type="gene designation" value="YNL134C"/>
</dbReference>
<dbReference type="VEuPathDB" id="FungiDB:YNL134C"/>
<dbReference type="eggNOG" id="KOG1198">
    <property type="taxonomic scope" value="Eukaryota"/>
</dbReference>
<dbReference type="GeneTree" id="ENSGT00940000176384"/>
<dbReference type="HOGENOM" id="CLU_026673_16_1_1"/>
<dbReference type="InParanoid" id="P53912"/>
<dbReference type="OMA" id="EDIEYGI"/>
<dbReference type="OrthoDB" id="9992527at2759"/>
<dbReference type="BioCyc" id="MetaCyc:G3O-33154-MONOMER"/>
<dbReference type="BioCyc" id="YEAST:G3O-33154-MONOMER"/>
<dbReference type="BioGRID-ORCS" id="855588">
    <property type="hits" value="0 hits in 10 CRISPR screens"/>
</dbReference>
<dbReference type="PRO" id="PR:P53912"/>
<dbReference type="Proteomes" id="UP000002311">
    <property type="component" value="Chromosome XIV"/>
</dbReference>
<dbReference type="RNAct" id="P53912">
    <property type="molecule type" value="protein"/>
</dbReference>
<dbReference type="GO" id="GO:0005737">
    <property type="term" value="C:cytoplasm"/>
    <property type="evidence" value="ECO:0007005"/>
    <property type="project" value="SGD"/>
</dbReference>
<dbReference type="GO" id="GO:0005634">
    <property type="term" value="C:nucleus"/>
    <property type="evidence" value="ECO:0007005"/>
    <property type="project" value="SGD"/>
</dbReference>
<dbReference type="GO" id="GO:0004029">
    <property type="term" value="F:aldehyde dehydrogenase (NAD+) activity"/>
    <property type="evidence" value="ECO:0000314"/>
    <property type="project" value="SGD"/>
</dbReference>
<dbReference type="GO" id="GO:0016651">
    <property type="term" value="F:oxidoreductase activity, acting on NAD(P)H"/>
    <property type="evidence" value="ECO:0007669"/>
    <property type="project" value="InterPro"/>
</dbReference>
<dbReference type="GO" id="GO:1901426">
    <property type="term" value="P:response to furfural"/>
    <property type="evidence" value="ECO:0000315"/>
    <property type="project" value="SGD"/>
</dbReference>
<dbReference type="CDD" id="cd08249">
    <property type="entry name" value="enoyl_reductase_like"/>
    <property type="match status" value="1"/>
</dbReference>
<dbReference type="Gene3D" id="3.90.180.10">
    <property type="entry name" value="Medium-chain alcohol dehydrogenases, catalytic domain"/>
    <property type="match status" value="1"/>
</dbReference>
<dbReference type="Gene3D" id="3.40.50.720">
    <property type="entry name" value="NAD(P)-binding Rossmann-like Domain"/>
    <property type="match status" value="1"/>
</dbReference>
<dbReference type="InterPro" id="IPR013149">
    <property type="entry name" value="ADH-like_C"/>
</dbReference>
<dbReference type="InterPro" id="IPR013154">
    <property type="entry name" value="ADH-like_N"/>
</dbReference>
<dbReference type="InterPro" id="IPR011032">
    <property type="entry name" value="GroES-like_sf"/>
</dbReference>
<dbReference type="InterPro" id="IPR036291">
    <property type="entry name" value="NAD(P)-bd_dom_sf"/>
</dbReference>
<dbReference type="InterPro" id="IPR020843">
    <property type="entry name" value="PKS_ER"/>
</dbReference>
<dbReference type="InterPro" id="IPR047122">
    <property type="entry name" value="Trans-enoyl_RdTase-like"/>
</dbReference>
<dbReference type="PANTHER" id="PTHR45348">
    <property type="entry name" value="HYPOTHETICAL OXIDOREDUCTASE (EUROFUNG)"/>
    <property type="match status" value="1"/>
</dbReference>
<dbReference type="PANTHER" id="PTHR45348:SF2">
    <property type="entry name" value="ZINC-TYPE ALCOHOL DEHYDROGENASE-LIKE PROTEIN C2E1P3.01"/>
    <property type="match status" value="1"/>
</dbReference>
<dbReference type="Pfam" id="PF08240">
    <property type="entry name" value="ADH_N"/>
    <property type="match status" value="1"/>
</dbReference>
<dbReference type="Pfam" id="PF00107">
    <property type="entry name" value="ADH_zinc_N"/>
    <property type="match status" value="1"/>
</dbReference>
<dbReference type="SMART" id="SM00829">
    <property type="entry name" value="PKS_ER"/>
    <property type="match status" value="1"/>
</dbReference>
<dbReference type="SUPFAM" id="SSF50129">
    <property type="entry name" value="GroES-like"/>
    <property type="match status" value="1"/>
</dbReference>
<dbReference type="SUPFAM" id="SSF51735">
    <property type="entry name" value="NAD(P)-binding Rossmann-fold domains"/>
    <property type="match status" value="1"/>
</dbReference>